<feature type="signal peptide" evidence="3">
    <location>
        <begin position="1"/>
        <end position="23"/>
    </location>
</feature>
<feature type="chain" id="PRO_0000010922" description="Interleukin-12 receptor subunit beta-2">
    <location>
        <begin position="24"/>
        <end position="861"/>
    </location>
</feature>
<feature type="topological domain" description="Extracellular" evidence="3">
    <location>
        <begin position="24"/>
        <end position="622"/>
    </location>
</feature>
<feature type="transmembrane region" description="Helical" evidence="3">
    <location>
        <begin position="623"/>
        <end position="643"/>
    </location>
</feature>
<feature type="topological domain" description="Cytoplasmic" evidence="3">
    <location>
        <begin position="644"/>
        <end position="861"/>
    </location>
</feature>
<feature type="domain" description="Fibronectin type-III 1" evidence="4">
    <location>
        <begin position="126"/>
        <end position="224"/>
    </location>
</feature>
<feature type="domain" description="Fibronectin type-III 2" evidence="4">
    <location>
        <begin position="226"/>
        <end position="317"/>
    </location>
</feature>
<feature type="domain" description="Fibronectin type-III 3" evidence="4">
    <location>
        <begin position="318"/>
        <end position="415"/>
    </location>
</feature>
<feature type="domain" description="Fibronectin type-III 4" evidence="4">
    <location>
        <begin position="423"/>
        <end position="520"/>
    </location>
</feature>
<feature type="domain" description="Fibronectin type-III 5" evidence="4">
    <location>
        <begin position="521"/>
        <end position="620"/>
    </location>
</feature>
<feature type="region of interest" description="Disordered" evidence="5">
    <location>
        <begin position="718"/>
        <end position="761"/>
    </location>
</feature>
<feature type="short sequence motif" description="WSXWS motif">
    <location>
        <begin position="305"/>
        <end position="309"/>
    </location>
</feature>
<feature type="short sequence motif" description="Box 1 motif">
    <location>
        <begin position="662"/>
        <end position="670"/>
    </location>
</feature>
<feature type="modified residue" description="Phosphotyrosine" evidence="2">
    <location>
        <position position="800"/>
    </location>
</feature>
<feature type="glycosylation site" description="N-linked (GlcNAc...) asparagine" evidence="3">
    <location>
        <position position="48"/>
    </location>
</feature>
<feature type="glycosylation site" description="N-linked (GlcNAc...) asparagine" evidence="3">
    <location>
        <position position="129"/>
    </location>
</feature>
<feature type="glycosylation site" description="N-linked (GlcNAc...) asparagine" evidence="3">
    <location>
        <position position="166"/>
    </location>
</feature>
<feature type="glycosylation site" description="N-linked (GlcNAc...) asparagine" evidence="3">
    <location>
        <position position="271"/>
    </location>
</feature>
<feature type="glycosylation site" description="N-linked (GlcNAc...) asparagine" evidence="3">
    <location>
        <position position="347"/>
    </location>
</feature>
<feature type="glycosylation site" description="N-linked (GlcNAc...) asparagine" evidence="3">
    <location>
        <position position="376"/>
    </location>
</feature>
<feature type="glycosylation site" description="N-linked (GlcNAc...) asparagine" evidence="3">
    <location>
        <position position="480"/>
    </location>
</feature>
<feature type="sequence conflict" description="In Ref. 2; AAL60218." evidence="6" ref="2">
    <original>LPS</original>
    <variation>FPC</variation>
    <location>
        <begin position="212"/>
        <end position="214"/>
    </location>
</feature>
<feature type="sequence conflict" description="In Ref. 2; AAL60218." evidence="6" ref="2">
    <original>F</original>
    <variation>L</variation>
    <location>
        <position position="218"/>
    </location>
</feature>
<feature type="sequence conflict" description="In Ref. 2; AAL60218." evidence="6" ref="2">
    <original>V</original>
    <variation>M</variation>
    <location>
        <position position="239"/>
    </location>
</feature>
<feature type="sequence conflict" description="In Ref. 2; AAL60218." evidence="6" ref="2">
    <original>G</original>
    <variation>S</variation>
    <location>
        <position position="404"/>
    </location>
</feature>
<feature type="sequence conflict" description="In Ref. 2; AAL60218." evidence="6" ref="2">
    <original>L</original>
    <variation>P</variation>
    <location>
        <position position="474"/>
    </location>
</feature>
<feature type="sequence conflict" description="In Ref. 2; AAL60218." evidence="6" ref="2">
    <original>C</original>
    <variation>R</variation>
    <location>
        <position position="509"/>
    </location>
</feature>
<feature type="sequence conflict" description="In Ref. 2; AAL60218." evidence="6" ref="2">
    <original>R</original>
    <variation>H</variation>
    <location>
        <position position="736"/>
    </location>
</feature>
<feature type="sequence conflict" description="In Ref. 2; AAL60218." evidence="6" ref="2">
    <original>M</original>
    <variation>I</variation>
    <location>
        <position position="805"/>
    </location>
</feature>
<feature type="sequence conflict" description="In Ref. 2; AAL60218." evidence="6" ref="2">
    <original>A</original>
    <variation>T</variation>
    <location>
        <position position="848"/>
    </location>
</feature>
<comment type="function">
    <text>Receptor for interleukin-12. This subunit is the signaling component coupling to the JAK2/STAT4 pathway.</text>
</comment>
<comment type="subunit">
    <text evidence="1">Heterodimer/heterooligomer; disulfide-linked. The functional high affinity IL12 receptor is composed of I12RB1 and IL12RB2. Il12RB2 binds JAK2 (via its N-terminal) through a membrane-proximal region of the cytoplasmic domain (By similarity).</text>
</comment>
<comment type="subcellular location">
    <subcellularLocation>
        <location>Membrane</location>
        <topology>Single-pass type I membrane protein</topology>
    </subcellularLocation>
</comment>
<comment type="domain">
    <text>The WSXWS motif appears to be necessary for proper protein folding and thereby efficient intracellular transport and cell-surface receptor binding.</text>
</comment>
<comment type="domain">
    <text>The box 1 motif is required for JAK interaction and/or activation.</text>
</comment>
<comment type="PTM">
    <text evidence="1">On IL12 stimulation, phosphorylated on C-terminal tyrosine residues.</text>
</comment>
<comment type="similarity">
    <text evidence="6">Belongs to the type I cytokine receptor family. Type 2 subfamily.</text>
</comment>
<name>I12R2_PIG</name>
<evidence type="ECO:0000250" key="1"/>
<evidence type="ECO:0000250" key="2">
    <source>
        <dbReference type="UniProtKB" id="Q99665"/>
    </source>
</evidence>
<evidence type="ECO:0000255" key="3"/>
<evidence type="ECO:0000255" key="4">
    <source>
        <dbReference type="PROSITE-ProRule" id="PRU00316"/>
    </source>
</evidence>
<evidence type="ECO:0000256" key="5">
    <source>
        <dbReference type="SAM" id="MobiDB-lite"/>
    </source>
</evidence>
<evidence type="ECO:0000305" key="6"/>
<keyword id="KW-1015">Disulfide bond</keyword>
<keyword id="KW-0325">Glycoprotein</keyword>
<keyword id="KW-0472">Membrane</keyword>
<keyword id="KW-0597">Phosphoprotein</keyword>
<keyword id="KW-0675">Receptor</keyword>
<keyword id="KW-1185">Reference proteome</keyword>
<keyword id="KW-0677">Repeat</keyword>
<keyword id="KW-0732">Signal</keyword>
<keyword id="KW-0812">Transmembrane</keyword>
<keyword id="KW-1133">Transmembrane helix</keyword>
<accession>Q8MJS1</accession>
<accession>Q8WN24</accession>
<reference key="1">
    <citation type="journal article" date="2003" name="Vet. Immunol. Immunopathol.">
        <title>Cloning of porcine interleukin (IL)-12 receptor beta2 (IL-12Rbeta2) gene and its application to a rapid biological assay for human/porcine IL-12.</title>
        <authorList>
            <person name="Kokuho T."/>
            <person name="Inumaru S."/>
            <person name="Watanabe S."/>
            <person name="Kubota T."/>
        </authorList>
    </citation>
    <scope>NUCLEOTIDE SEQUENCE [MRNA]</scope>
    <source>
        <tissue>Peripheral blood monocyte</tissue>
    </source>
</reference>
<reference key="2">
    <citation type="journal article" date="2002" name="Vet. Immunol. Immunopathol.">
        <title>Limited effect of recombinant porcine interleukin-12 on porcine lymphocytes due to a low level of IL-12 beta2 receptor.</title>
        <authorList>
            <person name="Solano-Aguilar G.I."/>
            <person name="Zarlenga D."/>
            <person name="Beshah E."/>
            <person name="Vengroski K."/>
            <person name="Gasbarre L."/>
            <person name="Junker D.E."/>
            <person name="Cochran M.D."/>
            <person name="Weston C.Q."/>
            <person name="Valencia D.M."/>
            <person name="Chiang C."/>
            <person name="Dawson H.D."/>
            <person name="Urban J.F. Jr."/>
            <person name="Lunney J.K."/>
        </authorList>
    </citation>
    <scope>NUCLEOTIDE SEQUENCE [MRNA] OF 12-859</scope>
    <source>
        <tissue>Lymphoblast</tissue>
    </source>
</reference>
<reference key="3">
    <citation type="journal article" date="2003" name="Vet. Immunol. Immunopathol.">
        <authorList>
            <person name="Solano-Aguilar G.I."/>
            <person name="Zarlenga D."/>
            <person name="Beshah E."/>
            <person name="Vengroski K."/>
            <person name="Gasbarre L."/>
            <person name="Junker D.E."/>
            <person name="Cochran M.D."/>
            <person name="Weston C.Q."/>
            <person name="Valencia D.M."/>
            <person name="Chiang C."/>
            <person name="Dawson H.D."/>
            <person name="Urban J.F. Jr."/>
            <person name="Lunney J.K."/>
        </authorList>
    </citation>
    <scope>ERRATUM OF PUBMED:12383645</scope>
</reference>
<organism>
    <name type="scientific">Sus scrofa</name>
    <name type="common">Pig</name>
    <dbReference type="NCBI Taxonomy" id="9823"/>
    <lineage>
        <taxon>Eukaryota</taxon>
        <taxon>Metazoa</taxon>
        <taxon>Chordata</taxon>
        <taxon>Craniata</taxon>
        <taxon>Vertebrata</taxon>
        <taxon>Euteleostomi</taxon>
        <taxon>Mammalia</taxon>
        <taxon>Eutheria</taxon>
        <taxon>Laurasiatheria</taxon>
        <taxon>Artiodactyla</taxon>
        <taxon>Suina</taxon>
        <taxon>Suidae</taxon>
        <taxon>Sus</taxon>
    </lineage>
</organism>
<dbReference type="EMBL" id="AF330213">
    <property type="protein sequence ID" value="AAM47543.1"/>
    <property type="molecule type" value="mRNA"/>
</dbReference>
<dbReference type="EMBL" id="AF448143">
    <property type="protein sequence ID" value="AAL60218.1"/>
    <property type="molecule type" value="mRNA"/>
</dbReference>
<dbReference type="RefSeq" id="NP_999262.1">
    <property type="nucleotide sequence ID" value="NM_214097.2"/>
</dbReference>
<dbReference type="SMR" id="Q8MJS1"/>
<dbReference type="FunCoup" id="Q8MJS1">
    <property type="interactions" value="227"/>
</dbReference>
<dbReference type="STRING" id="9823.ENSSSCP00000004110"/>
<dbReference type="GlyCosmos" id="Q8MJS1">
    <property type="glycosylation" value="7 sites, No reported glycans"/>
</dbReference>
<dbReference type="GlyGen" id="Q8MJS1">
    <property type="glycosylation" value="8 sites"/>
</dbReference>
<dbReference type="PaxDb" id="9823-ENSSSCP00000004110"/>
<dbReference type="GeneID" id="397178"/>
<dbReference type="KEGG" id="ssc:397178"/>
<dbReference type="CTD" id="3595"/>
<dbReference type="eggNOG" id="ENOG502QRRE">
    <property type="taxonomic scope" value="Eukaryota"/>
</dbReference>
<dbReference type="InParanoid" id="Q8MJS1"/>
<dbReference type="OrthoDB" id="10005435at2759"/>
<dbReference type="Proteomes" id="UP000008227">
    <property type="component" value="Unplaced"/>
</dbReference>
<dbReference type="Proteomes" id="UP000314985">
    <property type="component" value="Unplaced"/>
</dbReference>
<dbReference type="Proteomes" id="UP000694570">
    <property type="component" value="Unplaced"/>
</dbReference>
<dbReference type="Proteomes" id="UP000694571">
    <property type="component" value="Unplaced"/>
</dbReference>
<dbReference type="Proteomes" id="UP000694720">
    <property type="component" value="Unplaced"/>
</dbReference>
<dbReference type="Proteomes" id="UP000694722">
    <property type="component" value="Unplaced"/>
</dbReference>
<dbReference type="Proteomes" id="UP000694723">
    <property type="component" value="Unplaced"/>
</dbReference>
<dbReference type="Proteomes" id="UP000694724">
    <property type="component" value="Unplaced"/>
</dbReference>
<dbReference type="Proteomes" id="UP000694725">
    <property type="component" value="Unplaced"/>
</dbReference>
<dbReference type="Proteomes" id="UP000694726">
    <property type="component" value="Unplaced"/>
</dbReference>
<dbReference type="Proteomes" id="UP000694727">
    <property type="component" value="Unplaced"/>
</dbReference>
<dbReference type="Proteomes" id="UP000694728">
    <property type="component" value="Unplaced"/>
</dbReference>
<dbReference type="GO" id="GO:0009897">
    <property type="term" value="C:external side of plasma membrane"/>
    <property type="evidence" value="ECO:0000318"/>
    <property type="project" value="GO_Central"/>
</dbReference>
<dbReference type="GO" id="GO:0043235">
    <property type="term" value="C:receptor complex"/>
    <property type="evidence" value="ECO:0000318"/>
    <property type="project" value="GO_Central"/>
</dbReference>
<dbReference type="GO" id="GO:0019955">
    <property type="term" value="F:cytokine binding"/>
    <property type="evidence" value="ECO:0000318"/>
    <property type="project" value="GO_Central"/>
</dbReference>
<dbReference type="GO" id="GO:0004896">
    <property type="term" value="F:cytokine receptor activity"/>
    <property type="evidence" value="ECO:0000318"/>
    <property type="project" value="GO_Central"/>
</dbReference>
<dbReference type="GO" id="GO:0019221">
    <property type="term" value="P:cytokine-mediated signaling pathway"/>
    <property type="evidence" value="ECO:0000318"/>
    <property type="project" value="GO_Central"/>
</dbReference>
<dbReference type="GO" id="GO:0008284">
    <property type="term" value="P:positive regulation of cell population proliferation"/>
    <property type="evidence" value="ECO:0000318"/>
    <property type="project" value="GO_Central"/>
</dbReference>
<dbReference type="CDD" id="cd00063">
    <property type="entry name" value="FN3"/>
    <property type="match status" value="3"/>
</dbReference>
<dbReference type="FunFam" id="2.60.40.10:FF:000789">
    <property type="entry name" value="Interleukin 12 receptor subunit beta 2"/>
    <property type="match status" value="1"/>
</dbReference>
<dbReference type="FunFam" id="2.60.40.10:FF:000875">
    <property type="entry name" value="Interleukin 12 receptor subunit beta 2"/>
    <property type="match status" value="1"/>
</dbReference>
<dbReference type="FunFam" id="2.60.40.10:FF:001079">
    <property type="entry name" value="Interleukin 12 receptor subunit beta 2"/>
    <property type="match status" value="1"/>
</dbReference>
<dbReference type="FunFam" id="2.60.40.10:FF:000862">
    <property type="entry name" value="interleukin-12 receptor subunit beta-2 isoform X1"/>
    <property type="match status" value="1"/>
</dbReference>
<dbReference type="FunFam" id="2.60.40.10:FF:001068">
    <property type="entry name" value="interleukin-12 receptor subunit beta-2 isoform X1"/>
    <property type="match status" value="1"/>
</dbReference>
<dbReference type="Gene3D" id="2.60.40.10">
    <property type="entry name" value="Immunoglobulins"/>
    <property type="match status" value="5"/>
</dbReference>
<dbReference type="InterPro" id="IPR003961">
    <property type="entry name" value="FN3_dom"/>
</dbReference>
<dbReference type="InterPro" id="IPR036116">
    <property type="entry name" value="FN3_sf"/>
</dbReference>
<dbReference type="InterPro" id="IPR003529">
    <property type="entry name" value="Hematopoietin_rcpt_Gp130_CS"/>
</dbReference>
<dbReference type="InterPro" id="IPR013783">
    <property type="entry name" value="Ig-like_fold"/>
</dbReference>
<dbReference type="InterPro" id="IPR010457">
    <property type="entry name" value="IgC2-like_lig-bd"/>
</dbReference>
<dbReference type="InterPro" id="IPR052672">
    <property type="entry name" value="Type1_Cytokine_Rcpt_Type2"/>
</dbReference>
<dbReference type="PANTHER" id="PTHR48423">
    <property type="entry name" value="INTERLEUKIN-27 RECEPTOR SUBUNIT ALPHA"/>
    <property type="match status" value="1"/>
</dbReference>
<dbReference type="PANTHER" id="PTHR48423:SF1">
    <property type="entry name" value="INTERLEUKIN-27 RECEPTOR SUBUNIT ALPHA"/>
    <property type="match status" value="1"/>
</dbReference>
<dbReference type="Pfam" id="PF00041">
    <property type="entry name" value="fn3"/>
    <property type="match status" value="2"/>
</dbReference>
<dbReference type="Pfam" id="PF06328">
    <property type="entry name" value="Lep_receptor_Ig"/>
    <property type="match status" value="1"/>
</dbReference>
<dbReference type="SMART" id="SM00060">
    <property type="entry name" value="FN3"/>
    <property type="match status" value="4"/>
</dbReference>
<dbReference type="SUPFAM" id="SSF49265">
    <property type="entry name" value="Fibronectin type III"/>
    <property type="match status" value="3"/>
</dbReference>
<dbReference type="PROSITE" id="PS50853">
    <property type="entry name" value="FN3"/>
    <property type="match status" value="4"/>
</dbReference>
<dbReference type="PROSITE" id="PS01353">
    <property type="entry name" value="HEMATOPO_REC_L_F2"/>
    <property type="match status" value="1"/>
</dbReference>
<sequence>MARTVCGCSWALIFIIMSLLVKAKIDVCKRGDVTVQPSHVISLGSAVNISCSLKPRQGCLQVSSLNKLILYRFHRRIHFQRGHSLSSQVTGLPLGTTLFVCKLACSSKEEIRICGAEISVGVVPEQPQNVSCMQKGERGTVACSWDRGRDTHLYTAYTLQLNGPKNLTWQKQCSDYYCDSLDLGINLPPESPESSYTAQVTAINSLGTASSLPSTFTFLDVVRPLPPWDIRIKCVNASVSTCTLQWRDEGLVLLNRLRYRPVYSRSWNMVNATNAKGRHDLVDLKPFTEYEFQISSKPHLQKGRWSDWSESLRTQTPEKEPTGMLDVWYMKQHIDYKRQQISLFWKNLSLSEARGKILHYQVTLQEVAEGNATLQNITERNSWTWTIPRTGIWAAAVSAANSKGSSLPTRINIADLCGAGLLAPQQVSANPEGSDNLLVKWTSPGEGATAVQEYVVEWRELHLRGGMQPPLSWLRSPPYNTSTLISDNIKPYICYEIRVHALSGDQGGCSSIRGDLKHKAPLSGPHINAISEEKGSILISWDEIPAQEQMGCILHYRIYWKERDSDSQPQLCEIPYRVSPKSHPINSLQPRVTYVLWMTALTAAGESPQGNEREFCLQGKANWSTFVAPSICIAVITVGVFSMRCFRQKVFVLLLALRPQWCSREIPDPANSTWAKKYPIVEEKKQLSLDRLLADWPTPEEPEPLVINEVLPQVTPVFRRPHHPNWPGKGQRLQGRHASEEDTGSSASSPPPPRALTAETGPAVDLYKVLGSRRPDSKPGNPVSHLTVLPVDYLPTHEGYLPSNMDYLPSHEAPITDSLEELPQHISLSVFPSNSLHPLTFSCGEKLALDQLKMGCGSLML</sequence>
<proteinExistence type="evidence at transcript level"/>
<gene>
    <name type="primary">IL12RB2</name>
</gene>
<protein>
    <recommendedName>
        <fullName>Interleukin-12 receptor subunit beta-2</fullName>
        <shortName>IL-12 receptor subunit beta-2</shortName>
        <shortName>IL-12R subunit beta-2</shortName>
        <shortName>IL-12R-beta-2</shortName>
        <shortName>IL-12RB2</shortName>
    </recommendedName>
</protein>